<organism>
    <name type="scientific">Brachyspira hyodysenteriae (strain ATCC 49526 / WA1)</name>
    <dbReference type="NCBI Taxonomy" id="565034"/>
    <lineage>
        <taxon>Bacteria</taxon>
        <taxon>Pseudomonadati</taxon>
        <taxon>Spirochaetota</taxon>
        <taxon>Spirochaetia</taxon>
        <taxon>Brachyspirales</taxon>
        <taxon>Brachyspiraceae</taxon>
        <taxon>Brachyspira</taxon>
    </lineage>
</organism>
<evidence type="ECO:0000255" key="1">
    <source>
        <dbReference type="HAMAP-Rule" id="MF_01032"/>
    </source>
</evidence>
<accession>C0R087</accession>
<feature type="chain" id="PRO_1000213360" description="3-isopropylmalate dehydratase small subunit">
    <location>
        <begin position="1"/>
        <end position="163"/>
    </location>
</feature>
<proteinExistence type="inferred from homology"/>
<sequence>MKAKGFVHKYGDNVDTDVIIPARYLNTANHKELAAHCMEDIDKDFVKKVKTGDIMVGGDNFGCGSSREHAPIAIKESGISCVIASSFARIFYRNSINIGLAILECDEASKKISDNDEVEVDFDNGLIKNITKNETYKAEPFPEFIKKIINSNGLLNSIKNSKG</sequence>
<protein>
    <recommendedName>
        <fullName evidence="1">3-isopropylmalate dehydratase small subunit</fullName>
        <ecNumber evidence="1">4.2.1.33</ecNumber>
    </recommendedName>
    <alternativeName>
        <fullName evidence="1">Alpha-IPM isomerase</fullName>
        <shortName evidence="1">IPMI</shortName>
    </alternativeName>
    <alternativeName>
        <fullName evidence="1">Isopropylmalate isomerase</fullName>
    </alternativeName>
</protein>
<comment type="function">
    <text evidence="1">Catalyzes the isomerization between 2-isopropylmalate and 3-isopropylmalate, via the formation of 2-isopropylmaleate.</text>
</comment>
<comment type="catalytic activity">
    <reaction evidence="1">
        <text>(2R,3S)-3-isopropylmalate = (2S)-2-isopropylmalate</text>
        <dbReference type="Rhea" id="RHEA:32287"/>
        <dbReference type="ChEBI" id="CHEBI:1178"/>
        <dbReference type="ChEBI" id="CHEBI:35121"/>
        <dbReference type="EC" id="4.2.1.33"/>
    </reaction>
</comment>
<comment type="pathway">
    <text evidence="1">Amino-acid biosynthesis; L-leucine biosynthesis; L-leucine from 3-methyl-2-oxobutanoate: step 2/4.</text>
</comment>
<comment type="subunit">
    <text evidence="1">Heterodimer of LeuC and LeuD.</text>
</comment>
<comment type="similarity">
    <text evidence="1">Belongs to the LeuD family. LeuD type 2 subfamily.</text>
</comment>
<reference key="1">
    <citation type="journal article" date="2009" name="PLoS ONE">
        <title>Genome sequence of the pathogenic intestinal spirochete Brachyspira hyodysenteriae reveals adaptations to its lifestyle in the porcine large intestine.</title>
        <authorList>
            <person name="Bellgard M.I."/>
            <person name="Wanchanthuek P."/>
            <person name="La T."/>
            <person name="Ryan K."/>
            <person name="Moolhuijzen P."/>
            <person name="Albertyn Z."/>
            <person name="Shaban B."/>
            <person name="Motro Y."/>
            <person name="Dunn D.S."/>
            <person name="Schibeci D."/>
            <person name="Hunter A."/>
            <person name="Barrero R."/>
            <person name="Phillips N.D."/>
            <person name="Hampson D.J."/>
        </authorList>
    </citation>
    <scope>NUCLEOTIDE SEQUENCE [LARGE SCALE GENOMIC DNA]</scope>
    <source>
        <strain>ATCC 49526 / WA1</strain>
    </source>
</reference>
<gene>
    <name evidence="1" type="primary">leuD</name>
    <name type="ordered locus">BHWA1_01042</name>
</gene>
<dbReference type="EC" id="4.2.1.33" evidence="1"/>
<dbReference type="EMBL" id="CP001357">
    <property type="protein sequence ID" value="ACN83525.1"/>
    <property type="molecule type" value="Genomic_DNA"/>
</dbReference>
<dbReference type="RefSeq" id="WP_012670574.1">
    <property type="nucleotide sequence ID" value="NC_012225.1"/>
</dbReference>
<dbReference type="SMR" id="C0R087"/>
<dbReference type="STRING" id="565034.BHWA1_01042"/>
<dbReference type="GeneID" id="63962150"/>
<dbReference type="KEGG" id="bhy:BHWA1_01042"/>
<dbReference type="eggNOG" id="COG0066">
    <property type="taxonomic scope" value="Bacteria"/>
</dbReference>
<dbReference type="HOGENOM" id="CLU_081378_1_1_12"/>
<dbReference type="UniPathway" id="UPA00048">
    <property type="reaction ID" value="UER00071"/>
</dbReference>
<dbReference type="Proteomes" id="UP000001803">
    <property type="component" value="Chromosome"/>
</dbReference>
<dbReference type="GO" id="GO:0003861">
    <property type="term" value="F:3-isopropylmalate dehydratase activity"/>
    <property type="evidence" value="ECO:0007669"/>
    <property type="project" value="UniProtKB-UniRule"/>
</dbReference>
<dbReference type="GO" id="GO:0009098">
    <property type="term" value="P:L-leucine biosynthetic process"/>
    <property type="evidence" value="ECO:0007669"/>
    <property type="project" value="UniProtKB-UniRule"/>
</dbReference>
<dbReference type="CDD" id="cd01577">
    <property type="entry name" value="IPMI_Swivel"/>
    <property type="match status" value="1"/>
</dbReference>
<dbReference type="FunFam" id="3.20.19.10:FF:000007">
    <property type="entry name" value="Isopropylmalate/citramalate isomerase small subunit"/>
    <property type="match status" value="1"/>
</dbReference>
<dbReference type="Gene3D" id="3.20.19.10">
    <property type="entry name" value="Aconitase, domain 4"/>
    <property type="match status" value="1"/>
</dbReference>
<dbReference type="HAMAP" id="MF_01032">
    <property type="entry name" value="LeuD_type2"/>
    <property type="match status" value="1"/>
</dbReference>
<dbReference type="InterPro" id="IPR015928">
    <property type="entry name" value="Aconitase/3IPM_dehydase_swvl"/>
</dbReference>
<dbReference type="InterPro" id="IPR000573">
    <property type="entry name" value="AconitaseA/IPMdHydase_ssu_swvl"/>
</dbReference>
<dbReference type="InterPro" id="IPR033940">
    <property type="entry name" value="IPMI_Swivel"/>
</dbReference>
<dbReference type="InterPro" id="IPR050075">
    <property type="entry name" value="LeuD"/>
</dbReference>
<dbReference type="InterPro" id="IPR011824">
    <property type="entry name" value="LeuD/DmdB_bac"/>
</dbReference>
<dbReference type="InterPro" id="IPR011827">
    <property type="entry name" value="LeuD_type2/HacB/DmdB"/>
</dbReference>
<dbReference type="NCBIfam" id="TIGR02084">
    <property type="entry name" value="leud"/>
    <property type="match status" value="1"/>
</dbReference>
<dbReference type="NCBIfam" id="TIGR02087">
    <property type="entry name" value="LEUD_arch"/>
    <property type="match status" value="1"/>
</dbReference>
<dbReference type="PANTHER" id="PTHR43345:SF2">
    <property type="entry name" value="3-ISOPROPYLMALATE DEHYDRATASE SMALL SUBUNIT 1"/>
    <property type="match status" value="1"/>
</dbReference>
<dbReference type="PANTHER" id="PTHR43345">
    <property type="entry name" value="3-ISOPROPYLMALATE DEHYDRATASE SMALL SUBUNIT 2-RELATED-RELATED"/>
    <property type="match status" value="1"/>
</dbReference>
<dbReference type="Pfam" id="PF00694">
    <property type="entry name" value="Aconitase_C"/>
    <property type="match status" value="1"/>
</dbReference>
<dbReference type="SUPFAM" id="SSF52016">
    <property type="entry name" value="LeuD/IlvD-like"/>
    <property type="match status" value="1"/>
</dbReference>
<name>LEUD_BRAHW</name>
<keyword id="KW-0028">Amino-acid biosynthesis</keyword>
<keyword id="KW-0100">Branched-chain amino acid biosynthesis</keyword>
<keyword id="KW-0432">Leucine biosynthesis</keyword>
<keyword id="KW-0456">Lyase</keyword>